<feature type="chain" id="PRO_0000182755" description="Glutamate dehydrogenase">
    <location>
        <begin position="1"/>
        <end position="420"/>
    </location>
</feature>
<feature type="active site" evidence="3">
    <location>
        <position position="105"/>
    </location>
</feature>
<feature type="binding site" evidence="2">
    <location>
        <begin position="220"/>
        <end position="226"/>
    </location>
    <ligand>
        <name>NAD(+)</name>
        <dbReference type="ChEBI" id="CHEBI:57540"/>
    </ligand>
</feature>
<comment type="catalytic activity">
    <reaction evidence="3">
        <text>L-glutamate + NAD(+) + H2O = 2-oxoglutarate + NH4(+) + NADH + H(+)</text>
        <dbReference type="Rhea" id="RHEA:15133"/>
        <dbReference type="ChEBI" id="CHEBI:15377"/>
        <dbReference type="ChEBI" id="CHEBI:15378"/>
        <dbReference type="ChEBI" id="CHEBI:16810"/>
        <dbReference type="ChEBI" id="CHEBI:28938"/>
        <dbReference type="ChEBI" id="CHEBI:29985"/>
        <dbReference type="ChEBI" id="CHEBI:57540"/>
        <dbReference type="ChEBI" id="CHEBI:57945"/>
        <dbReference type="EC" id="1.4.1.3"/>
    </reaction>
</comment>
<comment type="catalytic activity">
    <reaction evidence="3">
        <text>L-glutamate + NADP(+) + H2O = 2-oxoglutarate + NH4(+) + NADPH + H(+)</text>
        <dbReference type="Rhea" id="RHEA:11612"/>
        <dbReference type="ChEBI" id="CHEBI:15377"/>
        <dbReference type="ChEBI" id="CHEBI:15378"/>
        <dbReference type="ChEBI" id="CHEBI:16810"/>
        <dbReference type="ChEBI" id="CHEBI:28938"/>
        <dbReference type="ChEBI" id="CHEBI:29985"/>
        <dbReference type="ChEBI" id="CHEBI:57783"/>
        <dbReference type="ChEBI" id="CHEBI:58349"/>
        <dbReference type="EC" id="1.4.1.3"/>
    </reaction>
</comment>
<comment type="subunit">
    <text evidence="1">Homohexamer.</text>
</comment>
<comment type="subcellular location">
    <subcellularLocation>
        <location evidence="1">Cytoplasm</location>
    </subcellularLocation>
</comment>
<comment type="similarity">
    <text evidence="4">Belongs to the Glu/Leu/Phe/Val dehydrogenases family.</text>
</comment>
<accession>Q47950</accession>
<accession>G8ZJ34</accession>
<protein>
    <recommendedName>
        <fullName>Glutamate dehydrogenase</fullName>
        <shortName>GDH</shortName>
        <ecNumber>1.4.1.3</ecNumber>
    </recommendedName>
</protein>
<keyword id="KW-0963">Cytoplasm</keyword>
<keyword id="KW-0520">NAD</keyword>
<keyword id="KW-0521">NADP</keyword>
<keyword id="KW-0560">Oxidoreductase</keyword>
<gene>
    <name type="primary">gdhA</name>
    <name type="synonym">gdh</name>
    <name type="ordered locus">PYRAB05690</name>
    <name type="ORF">PAB0391</name>
</gene>
<proteinExistence type="inferred from homology"/>
<reference key="1">
    <citation type="journal article" date="2003" name="Mol. Microbiol.">
        <title>An integrated analysis of the genome of the hyperthermophilic archaeon Pyrococcus abyssi.</title>
        <authorList>
            <person name="Cohen G.N."/>
            <person name="Barbe V."/>
            <person name="Flament D."/>
            <person name="Galperin M."/>
            <person name="Heilig R."/>
            <person name="Lecompte O."/>
            <person name="Poch O."/>
            <person name="Prieur D."/>
            <person name="Querellou J."/>
            <person name="Ripp R."/>
            <person name="Thierry J.-C."/>
            <person name="Van der Oost J."/>
            <person name="Weissenbach J."/>
            <person name="Zivanovic Y."/>
            <person name="Forterre P."/>
        </authorList>
    </citation>
    <scope>NUCLEOTIDE SEQUENCE [LARGE SCALE GENOMIC DNA]</scope>
    <source>
        <strain>GE5 / Orsay</strain>
    </source>
</reference>
<reference key="2">
    <citation type="journal article" date="2012" name="Curr. Microbiol.">
        <title>Re-annotation of two hyperthermophilic archaea Pyrococcus abyssi GE5 and Pyrococcus furiosus DSM 3638.</title>
        <authorList>
            <person name="Gao J."/>
            <person name="Wang J."/>
        </authorList>
    </citation>
    <scope>GENOME REANNOTATION</scope>
    <source>
        <strain>GE5 / Orsay</strain>
    </source>
</reference>
<reference key="3">
    <citation type="submission" date="1993-06" db="EMBL/GenBank/DDBJ databases">
        <title>Cloning and sequencing of glutamate dehydrogenases from hyperthermophilic archaea.</title>
        <authorList>
            <person name="Borges K.M."/>
            <person name="Diruggiero J."/>
            <person name="Robb F.T."/>
        </authorList>
    </citation>
    <scope>NUCLEOTIDE SEQUENCE [GENOMIC DNA] OF 22-255</scope>
    <source>
        <strain>GE5 / Orsay</strain>
    </source>
</reference>
<organism>
    <name type="scientific">Pyrococcus abyssi (strain GE5 / Orsay)</name>
    <dbReference type="NCBI Taxonomy" id="272844"/>
    <lineage>
        <taxon>Archaea</taxon>
        <taxon>Methanobacteriati</taxon>
        <taxon>Methanobacteriota</taxon>
        <taxon>Thermococci</taxon>
        <taxon>Thermococcales</taxon>
        <taxon>Thermococcaceae</taxon>
        <taxon>Pyrococcus</taxon>
    </lineage>
</organism>
<evidence type="ECO:0000250" key="1"/>
<evidence type="ECO:0000255" key="2"/>
<evidence type="ECO:0000255" key="3">
    <source>
        <dbReference type="PROSITE-ProRule" id="PRU10011"/>
    </source>
</evidence>
<evidence type="ECO:0000305" key="4"/>
<dbReference type="EC" id="1.4.1.3"/>
<dbReference type="EMBL" id="AJ248284">
    <property type="protein sequence ID" value="CAB49491.1"/>
    <property type="molecule type" value="Genomic_DNA"/>
</dbReference>
<dbReference type="EMBL" id="L19116">
    <property type="protein sequence ID" value="AAA64796.1"/>
    <property type="molecule type" value="Genomic_DNA"/>
</dbReference>
<dbReference type="EMBL" id="HE613800">
    <property type="protein sequence ID" value="CCE69961.1"/>
    <property type="molecule type" value="Genomic_DNA"/>
</dbReference>
<dbReference type="PIR" id="D75176">
    <property type="entry name" value="D75176"/>
</dbReference>
<dbReference type="RefSeq" id="WP_010867693.1">
    <property type="nucleotide sequence ID" value="NC_000868.1"/>
</dbReference>
<dbReference type="SMR" id="Q47950"/>
<dbReference type="STRING" id="272844.PAB0391"/>
<dbReference type="KEGG" id="pab:PAB0391"/>
<dbReference type="PATRIC" id="fig|272844.11.peg.607"/>
<dbReference type="eggNOG" id="arCOG01352">
    <property type="taxonomic scope" value="Archaea"/>
</dbReference>
<dbReference type="HOGENOM" id="CLU_025763_1_2_2"/>
<dbReference type="OrthoDB" id="6425at2157"/>
<dbReference type="PhylomeDB" id="Q47950"/>
<dbReference type="Proteomes" id="UP000000810">
    <property type="component" value="Chromosome"/>
</dbReference>
<dbReference type="Proteomes" id="UP000009139">
    <property type="component" value="Chromosome"/>
</dbReference>
<dbReference type="GO" id="GO:0005737">
    <property type="term" value="C:cytoplasm"/>
    <property type="evidence" value="ECO:0007669"/>
    <property type="project" value="UniProtKB-SubCell"/>
</dbReference>
<dbReference type="GO" id="GO:0004352">
    <property type="term" value="F:glutamate dehydrogenase (NAD+) activity"/>
    <property type="evidence" value="ECO:0007669"/>
    <property type="project" value="TreeGrafter"/>
</dbReference>
<dbReference type="GO" id="GO:0004354">
    <property type="term" value="F:glutamate dehydrogenase (NADP+) activity"/>
    <property type="evidence" value="ECO:0007669"/>
    <property type="project" value="RHEA"/>
</dbReference>
<dbReference type="GO" id="GO:0006538">
    <property type="term" value="P:glutamate catabolic process"/>
    <property type="evidence" value="ECO:0007669"/>
    <property type="project" value="TreeGrafter"/>
</dbReference>
<dbReference type="CDD" id="cd01076">
    <property type="entry name" value="NAD_bind_1_Glu_DH"/>
    <property type="match status" value="1"/>
</dbReference>
<dbReference type="FunFam" id="3.40.50.10860:FF:000003">
    <property type="entry name" value="Glutamate dehydrogenase"/>
    <property type="match status" value="1"/>
</dbReference>
<dbReference type="Gene3D" id="3.40.50.10860">
    <property type="entry name" value="Leucine Dehydrogenase, chain A, domain 1"/>
    <property type="match status" value="1"/>
</dbReference>
<dbReference type="Gene3D" id="3.40.50.720">
    <property type="entry name" value="NAD(P)-binding Rossmann-like Domain"/>
    <property type="match status" value="1"/>
</dbReference>
<dbReference type="InterPro" id="IPR046346">
    <property type="entry name" value="Aminoacid_DH-like_N_sf"/>
</dbReference>
<dbReference type="InterPro" id="IPR053388">
    <property type="entry name" value="GLPV_dehydrogenases"/>
</dbReference>
<dbReference type="InterPro" id="IPR006095">
    <property type="entry name" value="Glu/Leu/Phe/Val/Trp_DH"/>
</dbReference>
<dbReference type="InterPro" id="IPR006096">
    <property type="entry name" value="Glu/Leu/Phe/Val/Trp_DH_C"/>
</dbReference>
<dbReference type="InterPro" id="IPR006097">
    <property type="entry name" value="Glu/Leu/Phe/Val/Trp_DH_dimer"/>
</dbReference>
<dbReference type="InterPro" id="IPR033524">
    <property type="entry name" value="Glu/Leu/Phe/Val_DH_AS"/>
</dbReference>
<dbReference type="InterPro" id="IPR014362">
    <property type="entry name" value="Glu_DH"/>
</dbReference>
<dbReference type="InterPro" id="IPR036291">
    <property type="entry name" value="NAD(P)-bd_dom_sf"/>
</dbReference>
<dbReference type="InterPro" id="IPR033922">
    <property type="entry name" value="NAD_bind_Glu_DH"/>
</dbReference>
<dbReference type="NCBIfam" id="NF040817">
    <property type="entry name" value="GdhA_Arch"/>
    <property type="match status" value="1"/>
</dbReference>
<dbReference type="PANTHER" id="PTHR11606">
    <property type="entry name" value="GLUTAMATE DEHYDROGENASE"/>
    <property type="match status" value="1"/>
</dbReference>
<dbReference type="PANTHER" id="PTHR11606:SF13">
    <property type="entry name" value="GLUTAMATE DEHYDROGENASE 1, MITOCHONDRIAL"/>
    <property type="match status" value="1"/>
</dbReference>
<dbReference type="Pfam" id="PF00208">
    <property type="entry name" value="ELFV_dehydrog"/>
    <property type="match status" value="1"/>
</dbReference>
<dbReference type="Pfam" id="PF02812">
    <property type="entry name" value="ELFV_dehydrog_N"/>
    <property type="match status" value="1"/>
</dbReference>
<dbReference type="PIRSF" id="PIRSF000185">
    <property type="entry name" value="Glu_DH"/>
    <property type="match status" value="1"/>
</dbReference>
<dbReference type="PRINTS" id="PR00082">
    <property type="entry name" value="GLFDHDRGNASE"/>
</dbReference>
<dbReference type="SMART" id="SM00839">
    <property type="entry name" value="ELFV_dehydrog"/>
    <property type="match status" value="1"/>
</dbReference>
<dbReference type="SUPFAM" id="SSF53223">
    <property type="entry name" value="Aminoacid dehydrogenase-like, N-terminal domain"/>
    <property type="match status" value="1"/>
</dbReference>
<dbReference type="SUPFAM" id="SSF51735">
    <property type="entry name" value="NAD(P)-binding Rossmann-fold domains"/>
    <property type="match status" value="1"/>
</dbReference>
<dbReference type="PROSITE" id="PS00074">
    <property type="entry name" value="GLFV_DEHYDROGENASE"/>
    <property type="match status" value="1"/>
</dbReference>
<sequence>MVEQDPFEIAVKQLERAAQYMKISEEALEFLKRPQRIVEVTIPVEMDDGSVKVFTGFRVQYNWARGPTKGGIRWHPEETLSTVKALAAWMTWKTAVMDLPYGGGKGGIIVDPKKLSDREKERLARGYIRAIYDVISPYEDIPAPDVYTNPQIMAWMMDEYETIARRKTPAFGIITGKPLSIGGSLGRNEATARGASYTIREAAKVLGWDDLKGKTIAIQGYGNAGYYLAKIMSEDYGMKVVAVSDSKGGIYNPDGLNADEVLKWKREHGSVKDFPGATNITNEELLELEVDVLAPAAIEEVITKKNADNIKAKIVAEVANGPVTPEADEILFEKGILQIPDFLCNAGGVTVSYFEWVQNITGYYWTLEEVREKLDKKMTKAFYDVYNTAKEKNIHMRDAAYVVAVQRVYQAMLDRGWVKH</sequence>
<name>DHE3_PYRAB</name>